<protein>
    <recommendedName>
        <fullName evidence="1">Lipoyl synthase</fullName>
        <ecNumber evidence="1">2.8.1.8</ecNumber>
    </recommendedName>
    <alternativeName>
        <fullName evidence="1">Lip-syn</fullName>
        <shortName evidence="1">LS</shortName>
    </alternativeName>
    <alternativeName>
        <fullName evidence="1">Lipoate synthase</fullName>
    </alternativeName>
    <alternativeName>
        <fullName evidence="1">Lipoic acid synthase</fullName>
    </alternativeName>
    <alternativeName>
        <fullName evidence="1">Sulfur insertion protein LipA</fullName>
    </alternativeName>
</protein>
<evidence type="ECO:0000255" key="1">
    <source>
        <dbReference type="HAMAP-Rule" id="MF_00206"/>
    </source>
</evidence>
<evidence type="ECO:0000255" key="2">
    <source>
        <dbReference type="PROSITE-ProRule" id="PRU01266"/>
    </source>
</evidence>
<organism>
    <name type="scientific">Escherichia coli O45:K1 (strain S88 / ExPEC)</name>
    <dbReference type="NCBI Taxonomy" id="585035"/>
    <lineage>
        <taxon>Bacteria</taxon>
        <taxon>Pseudomonadati</taxon>
        <taxon>Pseudomonadota</taxon>
        <taxon>Gammaproteobacteria</taxon>
        <taxon>Enterobacterales</taxon>
        <taxon>Enterobacteriaceae</taxon>
        <taxon>Escherichia</taxon>
    </lineage>
</organism>
<keyword id="KW-0004">4Fe-4S</keyword>
<keyword id="KW-0963">Cytoplasm</keyword>
<keyword id="KW-0408">Iron</keyword>
<keyword id="KW-0411">Iron-sulfur</keyword>
<keyword id="KW-0479">Metal-binding</keyword>
<keyword id="KW-1185">Reference proteome</keyword>
<keyword id="KW-0949">S-adenosyl-L-methionine</keyword>
<keyword id="KW-0808">Transferase</keyword>
<reference key="1">
    <citation type="journal article" date="2009" name="PLoS Genet.">
        <title>Organised genome dynamics in the Escherichia coli species results in highly diverse adaptive paths.</title>
        <authorList>
            <person name="Touchon M."/>
            <person name="Hoede C."/>
            <person name="Tenaillon O."/>
            <person name="Barbe V."/>
            <person name="Baeriswyl S."/>
            <person name="Bidet P."/>
            <person name="Bingen E."/>
            <person name="Bonacorsi S."/>
            <person name="Bouchier C."/>
            <person name="Bouvet O."/>
            <person name="Calteau A."/>
            <person name="Chiapello H."/>
            <person name="Clermont O."/>
            <person name="Cruveiller S."/>
            <person name="Danchin A."/>
            <person name="Diard M."/>
            <person name="Dossat C."/>
            <person name="Karoui M.E."/>
            <person name="Frapy E."/>
            <person name="Garry L."/>
            <person name="Ghigo J.M."/>
            <person name="Gilles A.M."/>
            <person name="Johnson J."/>
            <person name="Le Bouguenec C."/>
            <person name="Lescat M."/>
            <person name="Mangenot S."/>
            <person name="Martinez-Jehanne V."/>
            <person name="Matic I."/>
            <person name="Nassif X."/>
            <person name="Oztas S."/>
            <person name="Petit M.A."/>
            <person name="Pichon C."/>
            <person name="Rouy Z."/>
            <person name="Ruf C.S."/>
            <person name="Schneider D."/>
            <person name="Tourret J."/>
            <person name="Vacherie B."/>
            <person name="Vallenet D."/>
            <person name="Medigue C."/>
            <person name="Rocha E.P.C."/>
            <person name="Denamur E."/>
        </authorList>
    </citation>
    <scope>NUCLEOTIDE SEQUENCE [LARGE SCALE GENOMIC DNA]</scope>
    <source>
        <strain>S88 / ExPEC</strain>
    </source>
</reference>
<dbReference type="EC" id="2.8.1.8" evidence="1"/>
<dbReference type="EMBL" id="CU928161">
    <property type="protein sequence ID" value="CAR02009.1"/>
    <property type="molecule type" value="Genomic_DNA"/>
</dbReference>
<dbReference type="RefSeq" id="WP_000042632.1">
    <property type="nucleotide sequence ID" value="NC_011742.1"/>
</dbReference>
<dbReference type="SMR" id="B7MFQ1"/>
<dbReference type="GeneID" id="93776854"/>
<dbReference type="KEGG" id="ecz:ECS88_0669"/>
<dbReference type="HOGENOM" id="CLU_033144_2_1_6"/>
<dbReference type="UniPathway" id="UPA00538">
    <property type="reaction ID" value="UER00593"/>
</dbReference>
<dbReference type="Proteomes" id="UP000000747">
    <property type="component" value="Chromosome"/>
</dbReference>
<dbReference type="GO" id="GO:0005737">
    <property type="term" value="C:cytoplasm"/>
    <property type="evidence" value="ECO:0007669"/>
    <property type="project" value="UniProtKB-SubCell"/>
</dbReference>
<dbReference type="GO" id="GO:0051539">
    <property type="term" value="F:4 iron, 4 sulfur cluster binding"/>
    <property type="evidence" value="ECO:0007669"/>
    <property type="project" value="UniProtKB-UniRule"/>
</dbReference>
<dbReference type="GO" id="GO:0016992">
    <property type="term" value="F:lipoate synthase activity"/>
    <property type="evidence" value="ECO:0007669"/>
    <property type="project" value="UniProtKB-UniRule"/>
</dbReference>
<dbReference type="GO" id="GO:0046872">
    <property type="term" value="F:metal ion binding"/>
    <property type="evidence" value="ECO:0007669"/>
    <property type="project" value="UniProtKB-KW"/>
</dbReference>
<dbReference type="CDD" id="cd01335">
    <property type="entry name" value="Radical_SAM"/>
    <property type="match status" value="1"/>
</dbReference>
<dbReference type="FunFam" id="3.20.20.70:FF:000023">
    <property type="entry name" value="Lipoyl synthase"/>
    <property type="match status" value="1"/>
</dbReference>
<dbReference type="Gene3D" id="3.20.20.70">
    <property type="entry name" value="Aldolase class I"/>
    <property type="match status" value="1"/>
</dbReference>
<dbReference type="HAMAP" id="MF_00206">
    <property type="entry name" value="Lipoyl_synth"/>
    <property type="match status" value="1"/>
</dbReference>
<dbReference type="InterPro" id="IPR013785">
    <property type="entry name" value="Aldolase_TIM"/>
</dbReference>
<dbReference type="InterPro" id="IPR006638">
    <property type="entry name" value="Elp3/MiaA/NifB-like_rSAM"/>
</dbReference>
<dbReference type="InterPro" id="IPR031691">
    <property type="entry name" value="LIAS_N"/>
</dbReference>
<dbReference type="InterPro" id="IPR003698">
    <property type="entry name" value="Lipoyl_synth"/>
</dbReference>
<dbReference type="InterPro" id="IPR007197">
    <property type="entry name" value="rSAM"/>
</dbReference>
<dbReference type="NCBIfam" id="TIGR00510">
    <property type="entry name" value="lipA"/>
    <property type="match status" value="1"/>
</dbReference>
<dbReference type="NCBIfam" id="NF004019">
    <property type="entry name" value="PRK05481.1"/>
    <property type="match status" value="1"/>
</dbReference>
<dbReference type="NCBIfam" id="NF009544">
    <property type="entry name" value="PRK12928.1"/>
    <property type="match status" value="1"/>
</dbReference>
<dbReference type="PANTHER" id="PTHR10949">
    <property type="entry name" value="LIPOYL SYNTHASE"/>
    <property type="match status" value="1"/>
</dbReference>
<dbReference type="PANTHER" id="PTHR10949:SF0">
    <property type="entry name" value="LIPOYL SYNTHASE, MITOCHONDRIAL"/>
    <property type="match status" value="1"/>
</dbReference>
<dbReference type="Pfam" id="PF16881">
    <property type="entry name" value="LIAS_N"/>
    <property type="match status" value="1"/>
</dbReference>
<dbReference type="Pfam" id="PF04055">
    <property type="entry name" value="Radical_SAM"/>
    <property type="match status" value="1"/>
</dbReference>
<dbReference type="PIRSF" id="PIRSF005963">
    <property type="entry name" value="Lipoyl_synth"/>
    <property type="match status" value="1"/>
</dbReference>
<dbReference type="SFLD" id="SFLDF00271">
    <property type="entry name" value="lipoyl_synthase"/>
    <property type="match status" value="1"/>
</dbReference>
<dbReference type="SFLD" id="SFLDG01058">
    <property type="entry name" value="lipoyl_synthase_like"/>
    <property type="match status" value="1"/>
</dbReference>
<dbReference type="SMART" id="SM00729">
    <property type="entry name" value="Elp3"/>
    <property type="match status" value="1"/>
</dbReference>
<dbReference type="SUPFAM" id="SSF102114">
    <property type="entry name" value="Radical SAM enzymes"/>
    <property type="match status" value="1"/>
</dbReference>
<dbReference type="PROSITE" id="PS51918">
    <property type="entry name" value="RADICAL_SAM"/>
    <property type="match status" value="1"/>
</dbReference>
<feature type="chain" id="PRO_1000191450" description="Lipoyl synthase">
    <location>
        <begin position="1"/>
        <end position="321"/>
    </location>
</feature>
<feature type="domain" description="Radical SAM core" evidence="2">
    <location>
        <begin position="80"/>
        <end position="297"/>
    </location>
</feature>
<feature type="binding site" evidence="1">
    <location>
        <position position="68"/>
    </location>
    <ligand>
        <name>[4Fe-4S] cluster</name>
        <dbReference type="ChEBI" id="CHEBI:49883"/>
        <label>1</label>
    </ligand>
</feature>
<feature type="binding site" evidence="1">
    <location>
        <position position="73"/>
    </location>
    <ligand>
        <name>[4Fe-4S] cluster</name>
        <dbReference type="ChEBI" id="CHEBI:49883"/>
        <label>1</label>
    </ligand>
</feature>
<feature type="binding site" evidence="1">
    <location>
        <position position="79"/>
    </location>
    <ligand>
        <name>[4Fe-4S] cluster</name>
        <dbReference type="ChEBI" id="CHEBI:49883"/>
        <label>1</label>
    </ligand>
</feature>
<feature type="binding site" evidence="1">
    <location>
        <position position="94"/>
    </location>
    <ligand>
        <name>[4Fe-4S] cluster</name>
        <dbReference type="ChEBI" id="CHEBI:49883"/>
        <label>2</label>
        <note>4Fe-4S-S-AdoMet</note>
    </ligand>
</feature>
<feature type="binding site" evidence="1">
    <location>
        <position position="98"/>
    </location>
    <ligand>
        <name>[4Fe-4S] cluster</name>
        <dbReference type="ChEBI" id="CHEBI:49883"/>
        <label>2</label>
        <note>4Fe-4S-S-AdoMet</note>
    </ligand>
</feature>
<feature type="binding site" evidence="1">
    <location>
        <position position="101"/>
    </location>
    <ligand>
        <name>[4Fe-4S] cluster</name>
        <dbReference type="ChEBI" id="CHEBI:49883"/>
        <label>2</label>
        <note>4Fe-4S-S-AdoMet</note>
    </ligand>
</feature>
<feature type="binding site" evidence="1">
    <location>
        <position position="308"/>
    </location>
    <ligand>
        <name>[4Fe-4S] cluster</name>
        <dbReference type="ChEBI" id="CHEBI:49883"/>
        <label>1</label>
    </ligand>
</feature>
<proteinExistence type="inferred from homology"/>
<gene>
    <name evidence="1" type="primary">lipA</name>
    <name type="ordered locus">ECS88_0669</name>
</gene>
<accession>B7MFQ1</accession>
<sequence>MSKPIVMERGVKYRDADKMALIPVKNVATEREALLRKPEWMKIKLPADSTRIQGIKAAMRKNGLHSVCEEASCPNLAECFNHGTATFMILGAICTRRCPFCDVAHGRPVAPDANEPVKLAQTIADMALRYVVITSVDRDDLRDGGAQHFADCITAIREKSPQIKIETLVPDFRGRMDRALDILTATPPDVFNHNLENVPRIYRQVRPGADYNWSLKLLERFKEAHPEIPTKSGLMVGLGETNEEIIEVMRDLRRHGVTMLTLGQYLQPSRHHLPVQRYVSPDEFDEMKAEALAMGFTHAACGPFVRSSYHADLQAKGMEVK</sequence>
<comment type="function">
    <text evidence="1">Catalyzes the radical-mediated insertion of two sulfur atoms into the C-6 and C-8 positions of the octanoyl moiety bound to the lipoyl domains of lipoate-dependent enzymes, thereby converting the octanoylated domains into lipoylated derivatives.</text>
</comment>
<comment type="catalytic activity">
    <reaction evidence="1">
        <text>[[Fe-S] cluster scaffold protein carrying a second [4Fe-4S](2+) cluster] + N(6)-octanoyl-L-lysyl-[protein] + 2 oxidized [2Fe-2S]-[ferredoxin] + 2 S-adenosyl-L-methionine + 4 H(+) = [[Fe-S] cluster scaffold protein] + N(6)-[(R)-dihydrolipoyl]-L-lysyl-[protein] + 4 Fe(3+) + 2 hydrogen sulfide + 2 5'-deoxyadenosine + 2 L-methionine + 2 reduced [2Fe-2S]-[ferredoxin]</text>
        <dbReference type="Rhea" id="RHEA:16585"/>
        <dbReference type="Rhea" id="RHEA-COMP:9928"/>
        <dbReference type="Rhea" id="RHEA-COMP:10000"/>
        <dbReference type="Rhea" id="RHEA-COMP:10001"/>
        <dbReference type="Rhea" id="RHEA-COMP:10475"/>
        <dbReference type="Rhea" id="RHEA-COMP:14568"/>
        <dbReference type="Rhea" id="RHEA-COMP:14569"/>
        <dbReference type="ChEBI" id="CHEBI:15378"/>
        <dbReference type="ChEBI" id="CHEBI:17319"/>
        <dbReference type="ChEBI" id="CHEBI:29034"/>
        <dbReference type="ChEBI" id="CHEBI:29919"/>
        <dbReference type="ChEBI" id="CHEBI:33722"/>
        <dbReference type="ChEBI" id="CHEBI:33737"/>
        <dbReference type="ChEBI" id="CHEBI:33738"/>
        <dbReference type="ChEBI" id="CHEBI:57844"/>
        <dbReference type="ChEBI" id="CHEBI:59789"/>
        <dbReference type="ChEBI" id="CHEBI:78809"/>
        <dbReference type="ChEBI" id="CHEBI:83100"/>
        <dbReference type="EC" id="2.8.1.8"/>
    </reaction>
</comment>
<comment type="cofactor">
    <cofactor evidence="1">
        <name>[4Fe-4S] cluster</name>
        <dbReference type="ChEBI" id="CHEBI:49883"/>
    </cofactor>
    <text evidence="1">Binds 2 [4Fe-4S] clusters per subunit. One cluster is coordinated with 3 cysteines and an exchangeable S-adenosyl-L-methionine.</text>
</comment>
<comment type="pathway">
    <text evidence="1">Protein modification; protein lipoylation via endogenous pathway; protein N(6)-(lipoyl)lysine from octanoyl-[acyl-carrier-protein]: step 2/2.</text>
</comment>
<comment type="subcellular location">
    <subcellularLocation>
        <location evidence="1">Cytoplasm</location>
    </subcellularLocation>
</comment>
<comment type="similarity">
    <text evidence="1">Belongs to the radical SAM superfamily. Lipoyl synthase family.</text>
</comment>
<name>LIPA_ECO45</name>